<dbReference type="EMBL" id="CP000026">
    <property type="protein sequence ID" value="AAV79106.1"/>
    <property type="molecule type" value="Genomic_DNA"/>
</dbReference>
<dbReference type="RefSeq" id="WP_000358956.1">
    <property type="nucleotide sequence ID" value="NC_006511.1"/>
</dbReference>
<dbReference type="SMR" id="Q5PIU9"/>
<dbReference type="GeneID" id="93035747"/>
<dbReference type="KEGG" id="spt:SPA3290"/>
<dbReference type="HOGENOM" id="CLU_098841_0_1_6"/>
<dbReference type="Proteomes" id="UP000008185">
    <property type="component" value="Chromosome"/>
</dbReference>
<dbReference type="GO" id="GO:0022625">
    <property type="term" value="C:cytosolic large ribosomal subunit"/>
    <property type="evidence" value="ECO:0007669"/>
    <property type="project" value="TreeGrafter"/>
</dbReference>
<dbReference type="GO" id="GO:0008097">
    <property type="term" value="F:5S rRNA binding"/>
    <property type="evidence" value="ECO:0007669"/>
    <property type="project" value="TreeGrafter"/>
</dbReference>
<dbReference type="GO" id="GO:0003735">
    <property type="term" value="F:structural constituent of ribosome"/>
    <property type="evidence" value="ECO:0007669"/>
    <property type="project" value="InterPro"/>
</dbReference>
<dbReference type="GO" id="GO:0006412">
    <property type="term" value="P:translation"/>
    <property type="evidence" value="ECO:0007669"/>
    <property type="project" value="UniProtKB-UniRule"/>
</dbReference>
<dbReference type="CDD" id="cd00432">
    <property type="entry name" value="Ribosomal_L18_L5e"/>
    <property type="match status" value="1"/>
</dbReference>
<dbReference type="FunFam" id="3.30.420.100:FF:000001">
    <property type="entry name" value="50S ribosomal protein L18"/>
    <property type="match status" value="1"/>
</dbReference>
<dbReference type="Gene3D" id="3.30.420.100">
    <property type="match status" value="1"/>
</dbReference>
<dbReference type="HAMAP" id="MF_01337_B">
    <property type="entry name" value="Ribosomal_uL18_B"/>
    <property type="match status" value="1"/>
</dbReference>
<dbReference type="InterPro" id="IPR004389">
    <property type="entry name" value="Ribosomal_uL18_bac-type"/>
</dbReference>
<dbReference type="InterPro" id="IPR005484">
    <property type="entry name" value="Ribosomal_uL18_bac/euk"/>
</dbReference>
<dbReference type="NCBIfam" id="TIGR00060">
    <property type="entry name" value="L18_bact"/>
    <property type="match status" value="1"/>
</dbReference>
<dbReference type="PANTHER" id="PTHR12899">
    <property type="entry name" value="39S RIBOSOMAL PROTEIN L18, MITOCHONDRIAL"/>
    <property type="match status" value="1"/>
</dbReference>
<dbReference type="PANTHER" id="PTHR12899:SF3">
    <property type="entry name" value="LARGE RIBOSOMAL SUBUNIT PROTEIN UL18M"/>
    <property type="match status" value="1"/>
</dbReference>
<dbReference type="Pfam" id="PF00861">
    <property type="entry name" value="Ribosomal_L18p"/>
    <property type="match status" value="1"/>
</dbReference>
<dbReference type="SUPFAM" id="SSF53137">
    <property type="entry name" value="Translational machinery components"/>
    <property type="match status" value="1"/>
</dbReference>
<proteinExistence type="inferred from homology"/>
<name>RL18_SALPA</name>
<accession>Q5PIU9</accession>
<comment type="function">
    <text evidence="1">This is one of the proteins that bind and probably mediate the attachment of the 5S RNA into the large ribosomal subunit, where it forms part of the central protuberance.</text>
</comment>
<comment type="subunit">
    <text evidence="1">Part of the 50S ribosomal subunit; part of the 5S rRNA/L5/L18/L25 subcomplex. Contacts the 5S and 23S rRNAs.</text>
</comment>
<comment type="similarity">
    <text evidence="1">Belongs to the universal ribosomal protein uL18 family.</text>
</comment>
<feature type="chain" id="PRO_0000131335" description="Large ribosomal subunit protein uL18">
    <location>
        <begin position="1"/>
        <end position="117"/>
    </location>
</feature>
<sequence length="117" mass="12770">MDKKSARIRRATRARRKLKELGATRLVVHRTPRHIYAQVIAPNGSEVLVAASTVEKAIAEQLKYTGNKDAAAAVGKAVAERALEKGIKDVSFDRSGFQYHGRVQALADAAREAGLQF</sequence>
<reference key="1">
    <citation type="journal article" date="2004" name="Nat. Genet.">
        <title>Comparison of genome degradation in Paratyphi A and Typhi, human-restricted serovars of Salmonella enterica that cause typhoid.</title>
        <authorList>
            <person name="McClelland M."/>
            <person name="Sanderson K.E."/>
            <person name="Clifton S.W."/>
            <person name="Latreille P."/>
            <person name="Porwollik S."/>
            <person name="Sabo A."/>
            <person name="Meyer R."/>
            <person name="Bieri T."/>
            <person name="Ozersky P."/>
            <person name="McLellan M."/>
            <person name="Harkins C.R."/>
            <person name="Wang C."/>
            <person name="Nguyen C."/>
            <person name="Berghoff A."/>
            <person name="Elliott G."/>
            <person name="Kohlberg S."/>
            <person name="Strong C."/>
            <person name="Du F."/>
            <person name="Carter J."/>
            <person name="Kremizki C."/>
            <person name="Layman D."/>
            <person name="Leonard S."/>
            <person name="Sun H."/>
            <person name="Fulton L."/>
            <person name="Nash W."/>
            <person name="Miner T."/>
            <person name="Minx P."/>
            <person name="Delehaunty K."/>
            <person name="Fronick C."/>
            <person name="Magrini V."/>
            <person name="Nhan M."/>
            <person name="Warren W."/>
            <person name="Florea L."/>
            <person name="Spieth J."/>
            <person name="Wilson R.K."/>
        </authorList>
    </citation>
    <scope>NUCLEOTIDE SEQUENCE [LARGE SCALE GENOMIC DNA]</scope>
    <source>
        <strain>ATCC 9150 / SARB42</strain>
    </source>
</reference>
<keyword id="KW-0687">Ribonucleoprotein</keyword>
<keyword id="KW-0689">Ribosomal protein</keyword>
<keyword id="KW-0694">RNA-binding</keyword>
<keyword id="KW-0699">rRNA-binding</keyword>
<protein>
    <recommendedName>
        <fullName evidence="1">Large ribosomal subunit protein uL18</fullName>
    </recommendedName>
    <alternativeName>
        <fullName evidence="2">50S ribosomal protein L18</fullName>
    </alternativeName>
</protein>
<organism>
    <name type="scientific">Salmonella paratyphi A (strain ATCC 9150 / SARB42)</name>
    <dbReference type="NCBI Taxonomy" id="295319"/>
    <lineage>
        <taxon>Bacteria</taxon>
        <taxon>Pseudomonadati</taxon>
        <taxon>Pseudomonadota</taxon>
        <taxon>Gammaproteobacteria</taxon>
        <taxon>Enterobacterales</taxon>
        <taxon>Enterobacteriaceae</taxon>
        <taxon>Salmonella</taxon>
    </lineage>
</organism>
<gene>
    <name evidence="1" type="primary">rplR</name>
    <name type="ordered locus">SPA3290</name>
</gene>
<evidence type="ECO:0000255" key="1">
    <source>
        <dbReference type="HAMAP-Rule" id="MF_01337"/>
    </source>
</evidence>
<evidence type="ECO:0000305" key="2"/>